<sequence>CYFQNCPRGGKRALSDTELRQCLPCGPGGQGRCFGPSICCADALGCFVGTAEALRCQEENYLPSPCQSGQKPCGSGGRCAANGVCCNDESCVIEPECREEFHRPVRAGDRSNVTQLDGPAGALLLRLMQLAGAPEPQPAAPGGY</sequence>
<gene>
    <name type="primary">AVP</name>
</gene>
<proteinExistence type="evidence at protein level"/>
<organism>
    <name type="scientific">Cavia porcellus</name>
    <name type="common">Guinea pig</name>
    <dbReference type="NCBI Taxonomy" id="10141"/>
    <lineage>
        <taxon>Eukaryota</taxon>
        <taxon>Metazoa</taxon>
        <taxon>Chordata</taxon>
        <taxon>Craniata</taxon>
        <taxon>Vertebrata</taxon>
        <taxon>Euteleostomi</taxon>
        <taxon>Mammalia</taxon>
        <taxon>Eutheria</taxon>
        <taxon>Euarchontoglires</taxon>
        <taxon>Glires</taxon>
        <taxon>Rodentia</taxon>
        <taxon>Hystricomorpha</taxon>
        <taxon>Caviidae</taxon>
        <taxon>Cavia</taxon>
    </lineage>
</organism>
<name>NEU2_CAVPO</name>
<keyword id="KW-0027">Amidation</keyword>
<keyword id="KW-0165">Cleavage on pair of basic residues</keyword>
<keyword id="KW-0903">Direct protein sequencing</keyword>
<keyword id="KW-1015">Disulfide bond</keyword>
<keyword id="KW-0325">Glycoprotein</keyword>
<keyword id="KW-0372">Hormone</keyword>
<keyword id="KW-1185">Reference proteome</keyword>
<keyword id="KW-0964">Secreted</keyword>
<keyword id="KW-0838">Vasoactive</keyword>
<keyword id="KW-0839">Vasoconstrictor</keyword>
<reference key="1">
    <citation type="journal article" date="1987" name="FEBS Lett.">
        <title>Guinea pig neurohypophysial hormones. Peculiar processing of the three-domain vasopressin precursor.</title>
        <authorList>
            <person name="Chauvet M.-T."/>
            <person name="Rouille Y."/>
            <person name="Chauvet J."/>
            <person name="Acher R."/>
        </authorList>
    </citation>
    <scope>PROTEIN SEQUENCE</scope>
</reference>
<reference key="2">
    <citation type="journal article" date="1987" name="FEBS Lett.">
        <title>Conformation limited proteolysis in the common neurophysin-copeptin precursor shown by trypsin-sepharose chromatographic proteolysis.</title>
        <authorList>
            <person name="Chauvet J."/>
            <person name="Chauvet M.-T."/>
            <person name="Acher R."/>
        </authorList>
    </citation>
    <scope>PROTEIN SEQUENCE OF 13-144</scope>
</reference>
<reference key="3">
    <citation type="journal article" date="1987" name="Int. J. Pept. Protein Res.">
        <title>Guinea pig MSEL-neurophysin. Sequence comparison of eight mammalian MSEL-neurophysins.</title>
        <authorList>
            <person name="Chauvet M.-T."/>
            <person name="Chauvet J."/>
            <person name="Acher R."/>
        </authorList>
    </citation>
    <scope>PROTEIN SEQUENCE OF 13-105</scope>
</reference>
<reference key="4">
    <citation type="journal article" date="1986" name="FEBS Lett.">
        <title>Guinea pig copeptin. The glycopeptide domain of the vasopressin precursor.</title>
        <authorList>
            <person name="Chauvet M.-T."/>
            <person name="Chauvet J."/>
            <person name="Acher R."/>
        </authorList>
    </citation>
    <scope>PROTEIN SEQUENCE OF 95-132</scope>
    <scope>AMIDATION AT GLY-9</scope>
</reference>
<comment type="function">
    <text>Neurophysin 2 specifically binds vasopressin.</text>
</comment>
<comment type="function">
    <text evidence="2">Vasopressin has a direct antidiuretic action on the kidney, it also causes vasoconstriction of the peripheral vessels. Acts by binding to vasopressin receptors (V1bR/AVPR1B, V1aR/AVPR1A, and V2R/AVPR2) (By similarity).</text>
</comment>
<comment type="subunit">
    <text evidence="2">Interacts with vasopressin receptors V1bR/AVPR1B (Ki=85 pM), V1aR/AVPR1A (Ki=0.6 nM) and V2R/AVPR2 (Ki=4.9 nM) (By similarity). Interacts with oxytocin receptor (OXTR) (Ki=110 nM) (By similarity).</text>
</comment>
<comment type="subcellular location">
    <subcellularLocation>
        <location>Secreted</location>
    </subcellularLocation>
</comment>
<comment type="similarity">
    <text evidence="4">Belongs to the vasopressin/oxytocin family.</text>
</comment>
<dbReference type="PIR" id="A29101">
    <property type="entry name" value="A29101"/>
</dbReference>
<dbReference type="SMR" id="P10769"/>
<dbReference type="FunCoup" id="P10769">
    <property type="interactions" value="497"/>
</dbReference>
<dbReference type="STRING" id="10141.ENSCPOP00000015497"/>
<dbReference type="GlyCosmos" id="P10769">
    <property type="glycosylation" value="1 site, No reported glycans"/>
</dbReference>
<dbReference type="eggNOG" id="ENOG502S21K">
    <property type="taxonomic scope" value="Eukaryota"/>
</dbReference>
<dbReference type="HOGENOM" id="CLU_125770_0_0_1"/>
<dbReference type="InParanoid" id="P10769"/>
<dbReference type="Proteomes" id="UP000005447">
    <property type="component" value="Unassembled WGS sequence"/>
</dbReference>
<dbReference type="GO" id="GO:0005615">
    <property type="term" value="C:extracellular space"/>
    <property type="evidence" value="ECO:0007669"/>
    <property type="project" value="TreeGrafter"/>
</dbReference>
<dbReference type="GO" id="GO:0030141">
    <property type="term" value="C:secretory granule"/>
    <property type="evidence" value="ECO:0007669"/>
    <property type="project" value="TreeGrafter"/>
</dbReference>
<dbReference type="GO" id="GO:0005185">
    <property type="term" value="F:neurohypophyseal hormone activity"/>
    <property type="evidence" value="ECO:0007669"/>
    <property type="project" value="InterPro"/>
</dbReference>
<dbReference type="GO" id="GO:0031894">
    <property type="term" value="F:V1A vasopressin receptor binding"/>
    <property type="evidence" value="ECO:0007669"/>
    <property type="project" value="TreeGrafter"/>
</dbReference>
<dbReference type="GO" id="GO:0042310">
    <property type="term" value="P:vasoconstriction"/>
    <property type="evidence" value="ECO:0007669"/>
    <property type="project" value="UniProtKB-KW"/>
</dbReference>
<dbReference type="FunFam" id="2.60.9.10:FF:000001">
    <property type="entry name" value="oxytocin-neurophysin 1"/>
    <property type="match status" value="1"/>
</dbReference>
<dbReference type="Gene3D" id="2.60.9.10">
    <property type="entry name" value="Neurohypophysial hormone domain"/>
    <property type="match status" value="1"/>
</dbReference>
<dbReference type="InterPro" id="IPR000981">
    <property type="entry name" value="Neurhyp_horm"/>
</dbReference>
<dbReference type="InterPro" id="IPR036387">
    <property type="entry name" value="Neurhyp_horm_dom_sf"/>
</dbReference>
<dbReference type="InterPro" id="IPR022423">
    <property type="entry name" value="Neurohypophysial_hormone_CS"/>
</dbReference>
<dbReference type="PANTHER" id="PTHR11681">
    <property type="entry name" value="NEUROPHYSIN"/>
    <property type="match status" value="1"/>
</dbReference>
<dbReference type="PANTHER" id="PTHR11681:SF9">
    <property type="entry name" value="VASOPRESSIN-NEUROPHYSIN 2-COPEPTIN"/>
    <property type="match status" value="1"/>
</dbReference>
<dbReference type="Pfam" id="PF00220">
    <property type="entry name" value="Hormone_4"/>
    <property type="match status" value="1"/>
</dbReference>
<dbReference type="Pfam" id="PF00184">
    <property type="entry name" value="Hormone_5"/>
    <property type="match status" value="1"/>
</dbReference>
<dbReference type="PIRSF" id="PIRSF001815">
    <property type="entry name" value="Nonapeptide_hormone_precursor"/>
    <property type="match status" value="1"/>
</dbReference>
<dbReference type="PRINTS" id="PR00831">
    <property type="entry name" value="NEUROPHYSIN"/>
</dbReference>
<dbReference type="SMART" id="SM00003">
    <property type="entry name" value="NH"/>
    <property type="match status" value="1"/>
</dbReference>
<dbReference type="SUPFAM" id="SSF49606">
    <property type="entry name" value="Neurophysin II"/>
    <property type="match status" value="1"/>
</dbReference>
<dbReference type="PROSITE" id="PS00264">
    <property type="entry name" value="NEUROHYPOPHYS_HORM"/>
    <property type="match status" value="1"/>
</dbReference>
<accession>P10769</accession>
<feature type="peptide" id="PRO_0000020512" description="Arg-vasopressin">
    <location>
        <begin position="1"/>
        <end position="9"/>
    </location>
</feature>
<feature type="chain" id="PRO_0000020513" description="Neurophysin 2">
    <location>
        <begin position="13"/>
        <end position="105"/>
    </location>
</feature>
<feature type="peptide" id="PRO_0000020514" description="Copeptin">
    <location>
        <begin position="107"/>
        <end position="144"/>
    </location>
</feature>
<feature type="site" description="Important for agonist activity on V1aR/AVPR1A" evidence="2">
    <location>
        <position position="9"/>
    </location>
</feature>
<feature type="modified residue" description="Glycine amide" evidence="3">
    <location>
        <position position="9"/>
    </location>
</feature>
<feature type="glycosylation site" description="N-linked (GlcNAc...) asparagine">
    <location>
        <position position="112"/>
    </location>
</feature>
<feature type="disulfide bond">
    <location>
        <begin position="1"/>
        <end position="6"/>
    </location>
</feature>
<feature type="disulfide bond" evidence="1">
    <location>
        <begin position="22"/>
        <end position="66"/>
    </location>
</feature>
<feature type="disulfide bond" evidence="1">
    <location>
        <begin position="25"/>
        <end position="39"/>
    </location>
</feature>
<feature type="disulfide bond" evidence="1">
    <location>
        <begin position="33"/>
        <end position="56"/>
    </location>
</feature>
<feature type="disulfide bond" evidence="1">
    <location>
        <begin position="40"/>
        <end position="46"/>
    </location>
</feature>
<feature type="disulfide bond" evidence="1">
    <location>
        <begin position="73"/>
        <end position="85"/>
    </location>
</feature>
<feature type="disulfide bond" evidence="1">
    <location>
        <begin position="79"/>
        <end position="97"/>
    </location>
</feature>
<feature type="disulfide bond" evidence="1">
    <location>
        <begin position="86"/>
        <end position="91"/>
    </location>
</feature>
<evidence type="ECO:0000250" key="1">
    <source>
        <dbReference type="UniProtKB" id="P01175"/>
    </source>
</evidence>
<evidence type="ECO:0000250" key="2">
    <source>
        <dbReference type="UniProtKB" id="P01185"/>
    </source>
</evidence>
<evidence type="ECO:0000269" key="3">
    <source>
    </source>
</evidence>
<evidence type="ECO:0000305" key="4"/>
<protein>
    <recommendedName>
        <fullName>Vasopressin-neurophysin 2-copeptin</fullName>
    </recommendedName>
    <alternativeName>
        <fullName>AVP-NPII</fullName>
    </alternativeName>
    <component>
        <recommendedName>
            <fullName>Arg-vasopressin</fullName>
        </recommendedName>
        <alternativeName>
            <fullName>Arginine-vasopressin</fullName>
        </alternativeName>
    </component>
    <component>
        <recommendedName>
            <fullName>Neurophysin 2</fullName>
        </recommendedName>
        <alternativeName>
            <fullName>Neurophysin-II</fullName>
        </alternativeName>
    </component>
    <component>
        <recommendedName>
            <fullName>Copeptin</fullName>
        </recommendedName>
    </component>
</protein>